<evidence type="ECO:0000256" key="1">
    <source>
        <dbReference type="SAM" id="MobiDB-lite"/>
    </source>
</evidence>
<evidence type="ECO:0007829" key="2">
    <source>
        <dbReference type="PDB" id="5N9J"/>
    </source>
</evidence>
<gene>
    <name type="ORF">SPAC24C9.04</name>
</gene>
<feature type="chain" id="PRO_0000116695" description="Uncharacterized protein C24C9.04">
    <location>
        <begin position="1"/>
        <end position="121"/>
    </location>
</feature>
<feature type="region of interest" description="Disordered" evidence="1">
    <location>
        <begin position="101"/>
        <end position="121"/>
    </location>
</feature>
<feature type="compositionally biased region" description="Basic and acidic residues" evidence="1">
    <location>
        <begin position="102"/>
        <end position="112"/>
    </location>
</feature>
<feature type="helix" evidence="2">
    <location>
        <begin position="17"/>
        <end position="33"/>
    </location>
</feature>
<feature type="helix" evidence="2">
    <location>
        <begin position="44"/>
        <end position="61"/>
    </location>
</feature>
<feature type="helix" evidence="2">
    <location>
        <begin position="70"/>
        <end position="95"/>
    </location>
</feature>
<sequence length="121" mass="13789">MDPAHHIKDTSAELLSQQDFSILQSRLLEFLASQEARETVTASKELTLLRQGIRQLKEKVSKMEPEEMTVKEKKSIIEILKARIALKKAFLKMALSESNDTVVKKEDVRESPVDTFMENAT</sequence>
<name>YE44_SCHPO</name>
<keyword id="KW-0002">3D-structure</keyword>
<keyword id="KW-1185">Reference proteome</keyword>
<reference key="1">
    <citation type="journal article" date="2002" name="Nature">
        <title>The genome sequence of Schizosaccharomyces pombe.</title>
        <authorList>
            <person name="Wood V."/>
            <person name="Gwilliam R."/>
            <person name="Rajandream M.A."/>
            <person name="Lyne M.H."/>
            <person name="Lyne R."/>
            <person name="Stewart A."/>
            <person name="Sgouros J.G."/>
            <person name="Peat N."/>
            <person name="Hayles J."/>
            <person name="Baker S.G."/>
            <person name="Basham D."/>
            <person name="Bowman S."/>
            <person name="Brooks K."/>
            <person name="Brown D."/>
            <person name="Brown S."/>
            <person name="Chillingworth T."/>
            <person name="Churcher C.M."/>
            <person name="Collins M."/>
            <person name="Connor R."/>
            <person name="Cronin A."/>
            <person name="Davis P."/>
            <person name="Feltwell T."/>
            <person name="Fraser A."/>
            <person name="Gentles S."/>
            <person name="Goble A."/>
            <person name="Hamlin N."/>
            <person name="Harris D.E."/>
            <person name="Hidalgo J."/>
            <person name="Hodgson G."/>
            <person name="Holroyd S."/>
            <person name="Hornsby T."/>
            <person name="Howarth S."/>
            <person name="Huckle E.J."/>
            <person name="Hunt S."/>
            <person name="Jagels K."/>
            <person name="James K.D."/>
            <person name="Jones L."/>
            <person name="Jones M."/>
            <person name="Leather S."/>
            <person name="McDonald S."/>
            <person name="McLean J."/>
            <person name="Mooney P."/>
            <person name="Moule S."/>
            <person name="Mungall K.L."/>
            <person name="Murphy L.D."/>
            <person name="Niblett D."/>
            <person name="Odell C."/>
            <person name="Oliver K."/>
            <person name="O'Neil S."/>
            <person name="Pearson D."/>
            <person name="Quail M.A."/>
            <person name="Rabbinowitsch E."/>
            <person name="Rutherford K.M."/>
            <person name="Rutter S."/>
            <person name="Saunders D."/>
            <person name="Seeger K."/>
            <person name="Sharp S."/>
            <person name="Skelton J."/>
            <person name="Simmonds M.N."/>
            <person name="Squares R."/>
            <person name="Squares S."/>
            <person name="Stevens K."/>
            <person name="Taylor K."/>
            <person name="Taylor R.G."/>
            <person name="Tivey A."/>
            <person name="Walsh S.V."/>
            <person name="Warren T."/>
            <person name="Whitehead S."/>
            <person name="Woodward J.R."/>
            <person name="Volckaert G."/>
            <person name="Aert R."/>
            <person name="Robben J."/>
            <person name="Grymonprez B."/>
            <person name="Weltjens I."/>
            <person name="Vanstreels E."/>
            <person name="Rieger M."/>
            <person name="Schaefer M."/>
            <person name="Mueller-Auer S."/>
            <person name="Gabel C."/>
            <person name="Fuchs M."/>
            <person name="Duesterhoeft A."/>
            <person name="Fritzc C."/>
            <person name="Holzer E."/>
            <person name="Moestl D."/>
            <person name="Hilbert H."/>
            <person name="Borzym K."/>
            <person name="Langer I."/>
            <person name="Beck A."/>
            <person name="Lehrach H."/>
            <person name="Reinhardt R."/>
            <person name="Pohl T.M."/>
            <person name="Eger P."/>
            <person name="Zimmermann W."/>
            <person name="Wedler H."/>
            <person name="Wambutt R."/>
            <person name="Purnelle B."/>
            <person name="Goffeau A."/>
            <person name="Cadieu E."/>
            <person name="Dreano S."/>
            <person name="Gloux S."/>
            <person name="Lelaure V."/>
            <person name="Mottier S."/>
            <person name="Galibert F."/>
            <person name="Aves S.J."/>
            <person name="Xiang Z."/>
            <person name="Hunt C."/>
            <person name="Moore K."/>
            <person name="Hurst S.M."/>
            <person name="Lucas M."/>
            <person name="Rochet M."/>
            <person name="Gaillardin C."/>
            <person name="Tallada V.A."/>
            <person name="Garzon A."/>
            <person name="Thode G."/>
            <person name="Daga R.R."/>
            <person name="Cruzado L."/>
            <person name="Jimenez J."/>
            <person name="Sanchez M."/>
            <person name="del Rey F."/>
            <person name="Benito J."/>
            <person name="Dominguez A."/>
            <person name="Revuelta J.L."/>
            <person name="Moreno S."/>
            <person name="Armstrong J."/>
            <person name="Forsburg S.L."/>
            <person name="Cerutti L."/>
            <person name="Lowe T."/>
            <person name="McCombie W.R."/>
            <person name="Paulsen I."/>
            <person name="Potashkin J."/>
            <person name="Shpakovski G.V."/>
            <person name="Ussery D."/>
            <person name="Barrell B.G."/>
            <person name="Nurse P."/>
        </authorList>
    </citation>
    <scope>NUCLEOTIDE SEQUENCE [LARGE SCALE GENOMIC DNA]</scope>
    <source>
        <strain>972 / ATCC 24843</strain>
    </source>
</reference>
<proteinExistence type="evidence at protein level"/>
<accession>O13964</accession>
<dbReference type="EMBL" id="CU329670">
    <property type="protein sequence ID" value="CAB11261.1"/>
    <property type="molecule type" value="Genomic_DNA"/>
</dbReference>
<dbReference type="PIR" id="T38345">
    <property type="entry name" value="T38345"/>
</dbReference>
<dbReference type="PDB" id="5N9J">
    <property type="method" value="X-ray"/>
    <property type="resolution" value="3.40 A"/>
    <property type="chains" value="F=1-121"/>
</dbReference>
<dbReference type="PDB" id="5U0P">
    <property type="method" value="EM"/>
    <property type="resolution" value="4.40 A"/>
    <property type="chains" value="I=1-121"/>
</dbReference>
<dbReference type="PDB" id="5U0S">
    <property type="method" value="EM"/>
    <property type="resolution" value="7.80 A"/>
    <property type="chains" value="I=1-121"/>
</dbReference>
<dbReference type="PDBsum" id="5N9J"/>
<dbReference type="PDBsum" id="5U0P"/>
<dbReference type="PDBsum" id="5U0S"/>
<dbReference type="EMDB" id="EMD-8479"/>
<dbReference type="EMDB" id="EMD-8480"/>
<dbReference type="SMR" id="O13964"/>
<dbReference type="BioGRID" id="278172">
    <property type="interactions" value="1"/>
</dbReference>
<dbReference type="FunCoup" id="O13964">
    <property type="interactions" value="14"/>
</dbReference>
<dbReference type="IntAct" id="O13964">
    <property type="interactions" value="1"/>
</dbReference>
<dbReference type="STRING" id="284812.O13964"/>
<dbReference type="iPTMnet" id="O13964"/>
<dbReference type="SwissPalm" id="O13964"/>
<dbReference type="PaxDb" id="4896-SPAC24C9.04.1"/>
<dbReference type="EnsemblFungi" id="SPAC24C9.04.1">
    <property type="protein sequence ID" value="SPAC24C9.04.1:pep"/>
    <property type="gene ID" value="SPAC24C9.04"/>
</dbReference>
<dbReference type="KEGG" id="spo:2541676"/>
<dbReference type="PomBase" id="SPAC24C9.04"/>
<dbReference type="VEuPathDB" id="FungiDB:SPAC24C9.04"/>
<dbReference type="HOGENOM" id="CLU_2039415_0_0_1"/>
<dbReference type="InParanoid" id="O13964"/>
<dbReference type="OMA" id="TFMENAT"/>
<dbReference type="PRO" id="PR:O13964"/>
<dbReference type="Proteomes" id="UP000002485">
    <property type="component" value="Chromosome I"/>
</dbReference>
<dbReference type="GO" id="GO:0016592">
    <property type="term" value="C:mediator complex"/>
    <property type="evidence" value="ECO:0000314"/>
    <property type="project" value="PomBase"/>
</dbReference>
<dbReference type="GO" id="GO:0005634">
    <property type="term" value="C:nucleus"/>
    <property type="evidence" value="ECO:0007005"/>
    <property type="project" value="PomBase"/>
</dbReference>
<dbReference type="GO" id="GO:0003713">
    <property type="term" value="F:transcription coactivator activity"/>
    <property type="evidence" value="ECO:0000305"/>
    <property type="project" value="PomBase"/>
</dbReference>
<dbReference type="GO" id="GO:0060261">
    <property type="term" value="P:positive regulation of transcription initiation by RNA polymerase II"/>
    <property type="evidence" value="ECO:0000269"/>
    <property type="project" value="PomBase"/>
</dbReference>
<organism>
    <name type="scientific">Schizosaccharomyces pombe (strain 972 / ATCC 24843)</name>
    <name type="common">Fission yeast</name>
    <dbReference type="NCBI Taxonomy" id="284812"/>
    <lineage>
        <taxon>Eukaryota</taxon>
        <taxon>Fungi</taxon>
        <taxon>Dikarya</taxon>
        <taxon>Ascomycota</taxon>
        <taxon>Taphrinomycotina</taxon>
        <taxon>Schizosaccharomycetes</taxon>
        <taxon>Schizosaccharomycetales</taxon>
        <taxon>Schizosaccharomycetaceae</taxon>
        <taxon>Schizosaccharomyces</taxon>
    </lineage>
</organism>
<protein>
    <recommendedName>
        <fullName>Uncharacterized protein C24C9.04</fullName>
    </recommendedName>
</protein>